<comment type="function">
    <text evidence="2">Vacuolar iron transporter involved in the transfer of iron ions from the cytosol to the vacuole for intracellular iron storage (PubMed:30742036). Can transport cobalt ions from the cytosol to the vacuole (PubMed:30742036).</text>
</comment>
<comment type="catalytic activity">
    <reaction evidence="2">
        <text>Fe(2+)(in) = Fe(2+)(out)</text>
        <dbReference type="Rhea" id="RHEA:28486"/>
        <dbReference type="ChEBI" id="CHEBI:29033"/>
    </reaction>
    <physiologicalReaction direction="left-to-right" evidence="4">
        <dbReference type="Rhea" id="RHEA:28487"/>
    </physiologicalReaction>
</comment>
<comment type="activity regulation">
    <text evidence="2">Transport of iron ions is inhibited by zinc ions.</text>
</comment>
<comment type="subunit">
    <text evidence="2">Homodimer (PubMed:30742036). The dimeric interaction is mediated by both the transmembrane domains (TMDs) and the cytoplasmic metal binding domain (MBD) (PubMed:30742036).</text>
</comment>
<comment type="subcellular location">
    <subcellularLocation>
        <location evidence="5">Vacuole membrane</location>
        <topology evidence="1">Multi-pass membrane protein</topology>
    </subcellularLocation>
</comment>
<comment type="domain">
    <text evidence="2">The cytoplasmic metal binding domain (MBD) is located between transmembrane 2 (TM2) and transmembrane 3 (TM3).</text>
</comment>
<comment type="miscellaneous">
    <text evidence="2">Can mediate sequestration of iron ions into vacuoles when expressed in the yeast ccc1 mutant.</text>
</comment>
<comment type="similarity">
    <text evidence="4">Belongs to the CCC1 family.</text>
</comment>
<proteinExistence type="evidence at protein level"/>
<sequence length="249" mass="26278">MADGANDGGNPGAEEQQRLLDQHKEAHFTAGEIVRDIIIGVSDGLTVPFALAAGLSGANASSSIVLTAGIAEVAAGAISMGLGGYLAAKSEADNYARELKREQEEIIRVPDTEAAEVAEILARYGIEPHEYGPVVNALRKKPQAWLDFMMKFELGLEKPDPKRALQSAFTIAIAYVLGGLVPLIPYMFIPVARKAVVASVILTLMALLIFGYAKGYFTDNKPFKSALQTALIGAIASAAAFGMAKAVQS</sequence>
<name>VIT1_EUCGR</name>
<organism>
    <name type="scientific">Eucalyptus grandis</name>
    <name type="common">Flooded gum</name>
    <dbReference type="NCBI Taxonomy" id="71139"/>
    <lineage>
        <taxon>Eukaryota</taxon>
        <taxon>Viridiplantae</taxon>
        <taxon>Streptophyta</taxon>
        <taxon>Embryophyta</taxon>
        <taxon>Tracheophyta</taxon>
        <taxon>Spermatophyta</taxon>
        <taxon>Magnoliopsida</taxon>
        <taxon>eudicotyledons</taxon>
        <taxon>Gunneridae</taxon>
        <taxon>Pentapetalae</taxon>
        <taxon>rosids</taxon>
        <taxon>malvids</taxon>
        <taxon>Myrtales</taxon>
        <taxon>Myrtaceae</taxon>
        <taxon>Myrtoideae</taxon>
        <taxon>Eucalypteae</taxon>
        <taxon>Eucalyptus</taxon>
    </lineage>
</organism>
<dbReference type="RefSeq" id="XP_010066556.1">
    <property type="nucleotide sequence ID" value="XM_010068254.2"/>
</dbReference>
<dbReference type="PDB" id="6IU3">
    <property type="method" value="X-ray"/>
    <property type="resolution" value="2.70 A"/>
    <property type="chains" value="A=23-249"/>
</dbReference>
<dbReference type="PDB" id="6IU4">
    <property type="method" value="X-ray"/>
    <property type="resolution" value="3.50 A"/>
    <property type="chains" value="A=23-249"/>
</dbReference>
<dbReference type="PDB" id="6IU5">
    <property type="method" value="X-ray"/>
    <property type="resolution" value="2.25 A"/>
    <property type="chains" value="A/B/C/D/E/F/H/I=90-165"/>
</dbReference>
<dbReference type="PDB" id="6IU6">
    <property type="method" value="X-ray"/>
    <property type="resolution" value="2.90 A"/>
    <property type="chains" value="A/B/C/D/E/F/H/I=90-165"/>
</dbReference>
<dbReference type="PDB" id="6IU8">
    <property type="method" value="X-ray"/>
    <property type="resolution" value="2.70 A"/>
    <property type="chains" value="A/B/C/D/E/F/H/I=90-165"/>
</dbReference>
<dbReference type="PDB" id="6IU9">
    <property type="method" value="X-ray"/>
    <property type="resolution" value="3.00 A"/>
    <property type="chains" value="A/B/C/D/E/F/H/I=90-165"/>
</dbReference>
<dbReference type="PDBsum" id="6IU3"/>
<dbReference type="PDBsum" id="6IU4"/>
<dbReference type="PDBsum" id="6IU5"/>
<dbReference type="PDBsum" id="6IU6"/>
<dbReference type="PDBsum" id="6IU8"/>
<dbReference type="PDBsum" id="6IU9"/>
<dbReference type="SMR" id="P0DO17"/>
<dbReference type="KEGG" id="egr:104453645"/>
<dbReference type="OrthoDB" id="73465at2759"/>
<dbReference type="GO" id="GO:0005774">
    <property type="term" value="C:vacuolar membrane"/>
    <property type="evidence" value="ECO:0000314"/>
    <property type="project" value="UniProtKB"/>
</dbReference>
<dbReference type="GO" id="GO:0005384">
    <property type="term" value="F:manganese ion transmembrane transporter activity"/>
    <property type="evidence" value="ECO:0007669"/>
    <property type="project" value="InterPro"/>
</dbReference>
<dbReference type="GO" id="GO:0046872">
    <property type="term" value="F:metal ion binding"/>
    <property type="evidence" value="ECO:0007669"/>
    <property type="project" value="UniProtKB-KW"/>
</dbReference>
<dbReference type="GO" id="GO:0042803">
    <property type="term" value="F:protein homodimerization activity"/>
    <property type="evidence" value="ECO:0000314"/>
    <property type="project" value="UniProtKB"/>
</dbReference>
<dbReference type="GO" id="GO:0030026">
    <property type="term" value="P:intracellular manganese ion homeostasis"/>
    <property type="evidence" value="ECO:0007669"/>
    <property type="project" value="InterPro"/>
</dbReference>
<dbReference type="GO" id="GO:0006826">
    <property type="term" value="P:iron ion transport"/>
    <property type="evidence" value="ECO:0007669"/>
    <property type="project" value="UniProtKB-KW"/>
</dbReference>
<dbReference type="CDD" id="cd02435">
    <property type="entry name" value="CCC1"/>
    <property type="match status" value="1"/>
</dbReference>
<dbReference type="InterPro" id="IPR008217">
    <property type="entry name" value="Ccc1_fam"/>
</dbReference>
<dbReference type="PANTHER" id="PTHR31851">
    <property type="entry name" value="FE(2+)/MN(2+) TRANSPORTER PCL1"/>
    <property type="match status" value="1"/>
</dbReference>
<dbReference type="Pfam" id="PF01988">
    <property type="entry name" value="VIT1"/>
    <property type="match status" value="1"/>
</dbReference>
<accession>P0DO17</accession>
<protein>
    <recommendedName>
        <fullName evidence="3">Vacuolar iron transporter 1</fullName>
        <shortName evidence="3">EgVIT1</shortName>
    </recommendedName>
</protein>
<reference key="1">
    <citation type="journal article" date="2014" name="Nature">
        <title>The genome of Eucalyptus grandis.</title>
        <authorList>
            <person name="Myburg A.A."/>
            <person name="Grattapaglia D."/>
            <person name="Tuskan G.A."/>
            <person name="Hellsten U."/>
            <person name="Hayes R.D."/>
            <person name="Grimwood J."/>
            <person name="Jenkins J."/>
            <person name="Lindquist E."/>
            <person name="Tice H."/>
            <person name="Bauer D."/>
            <person name="Goodstein D.M."/>
            <person name="Dubchak I."/>
            <person name="Poliakov A."/>
            <person name="Mizrachi E."/>
            <person name="Kullan A.R."/>
            <person name="Hussey S.G."/>
            <person name="Pinard D."/>
            <person name="van der Merwe K."/>
            <person name="Singh P."/>
            <person name="van Jaarsveld I."/>
            <person name="Silva-Junior O.B."/>
            <person name="Togawa R.C."/>
            <person name="Pappas M.R."/>
            <person name="Faria D.A."/>
            <person name="Sansaloni C.P."/>
            <person name="Petroli C.D."/>
            <person name="Yang X."/>
            <person name="Ranjan P."/>
            <person name="Tschaplinski T.J."/>
            <person name="Ye C.Y."/>
            <person name="Li T."/>
            <person name="Sterck L."/>
            <person name="Vanneste K."/>
            <person name="Murat F."/>
            <person name="Soler M."/>
            <person name="Clemente H.S."/>
            <person name="Saidi N."/>
            <person name="Cassan-Wang H."/>
            <person name="Dunand C."/>
            <person name="Hefer C.A."/>
            <person name="Bornberg-Bauer E."/>
            <person name="Kersting A.R."/>
            <person name="Vining K."/>
            <person name="Amarasinghe V."/>
            <person name="Ranik M."/>
            <person name="Naithani S."/>
            <person name="Elser J."/>
            <person name="Boyd A.E."/>
            <person name="Liston A."/>
            <person name="Spatafora J.W."/>
            <person name="Dharmwardhana P."/>
            <person name="Raja R."/>
            <person name="Sullivan C."/>
            <person name="Romanel E."/>
            <person name="Alves-Ferreira M."/>
            <person name="Kuelheim C."/>
            <person name="Foley W."/>
            <person name="Carocha V."/>
            <person name="Paiva J."/>
            <person name="Kudrna D."/>
            <person name="Brommonschenkel S.H."/>
            <person name="Pasquali G."/>
            <person name="Byrne M."/>
            <person name="Rigault P."/>
            <person name="Tibbits J."/>
            <person name="Spokevicius A."/>
            <person name="Jones R.C."/>
            <person name="Steane D.A."/>
            <person name="Vaillancourt R.E."/>
            <person name="Potts B.M."/>
            <person name="Joubert F."/>
            <person name="Barry K."/>
            <person name="Pappas G.J."/>
            <person name="Strauss S.H."/>
            <person name="Jaiswal P."/>
            <person name="Grima-Pettenati J."/>
            <person name="Salse J."/>
            <person name="Van de Peer Y."/>
            <person name="Rokhsar D.S."/>
            <person name="Schmutz J."/>
        </authorList>
    </citation>
    <scope>NUCLEOTIDE SEQUENCE [LARGE SCALE GENOMIC DNA]</scope>
</reference>
<reference key="2">
    <citation type="journal article" date="2019" name="Nat. Plants">
        <title>Crystal structure of plant vacuolar iron transporter VIT1.</title>
        <authorList>
            <person name="Kato T."/>
            <person name="Kumazaki K."/>
            <person name="Wada M."/>
            <person name="Taniguchi R."/>
            <person name="Nakane T."/>
            <person name="Yamashita K."/>
            <person name="Hirata K."/>
            <person name="Ishitani R."/>
            <person name="Ito K."/>
            <person name="Nishizawa T."/>
            <person name="Nureki O."/>
        </authorList>
    </citation>
    <scope>X-RAY CRYSTALLOGRAPHY (2.70 ANGSTROMS) OF 23-249 IN COMPLEX WITH IRON IONS; ZINC IONS; COBALT IONS AND NICKEL IONS</scope>
    <scope>FUNCTION</scope>
    <scope>TRANSPORTER ACTIVITY</scope>
    <scope>ACTIVITY REGULATION</scope>
    <scope>HOMODIMERIZATION</scope>
    <scope>SUBCELLULAR LOCATION</scope>
    <scope>DOMAIN</scope>
    <scope>MUTAGENESIS OF GLU-32; ASP-36; ASP-43; GLY-44; PRO-48; GLY-69; GLU-72; GLY-76; MET-80; GLU-102; GLU-105; GLU-113; GLU-116; 149-MET-MET-150 AND GLU-153</scope>
</reference>
<feature type="chain" id="PRO_0000447369" description="Vacuolar iron transporter 1">
    <location>
        <begin position="1"/>
        <end position="249"/>
    </location>
</feature>
<feature type="topological domain" description="Cytoplasmic" evidence="4">
    <location>
        <begin position="1"/>
        <end position="36"/>
    </location>
</feature>
<feature type="transmembrane region" description="Helical" evidence="1">
    <location>
        <begin position="37"/>
        <end position="57"/>
    </location>
</feature>
<feature type="topological domain" description="Vacuolar" evidence="4">
    <location>
        <begin position="58"/>
        <end position="63"/>
    </location>
</feature>
<feature type="transmembrane region" description="Helical" evidence="1">
    <location>
        <begin position="64"/>
        <end position="84"/>
    </location>
</feature>
<feature type="topological domain" description="Cytoplasmic" evidence="4">
    <location>
        <begin position="85"/>
        <end position="170"/>
    </location>
</feature>
<feature type="transmembrane region" description="Helical" evidence="1">
    <location>
        <begin position="171"/>
        <end position="191"/>
    </location>
</feature>
<feature type="topological domain" description="Vacuolar" evidence="4">
    <location>
        <begin position="192"/>
        <end position="194"/>
    </location>
</feature>
<feature type="transmembrane region" description="Helical" evidence="1">
    <location>
        <begin position="195"/>
        <end position="215"/>
    </location>
</feature>
<feature type="topological domain" description="Cytoplasmic" evidence="4">
    <location>
        <begin position="216"/>
        <end position="226"/>
    </location>
</feature>
<feature type="transmembrane region" description="Helical" evidence="1">
    <location>
        <begin position="227"/>
        <end position="247"/>
    </location>
</feature>
<feature type="topological domain" description="Vacuolar" evidence="4">
    <location>
        <begin position="248"/>
        <end position="249"/>
    </location>
</feature>
<feature type="region of interest" description="Cytoplasmic metal binding domain (MBD)" evidence="2">
    <location>
        <begin position="90"/>
        <end position="165"/>
    </location>
</feature>
<feature type="binding site" evidence="2 6 7">
    <location>
        <position position="102"/>
    </location>
    <ligand>
        <name>Fe cation</name>
        <dbReference type="ChEBI" id="CHEBI:24875"/>
        <label>1</label>
    </ligand>
</feature>
<feature type="binding site" evidence="2 6 7">
    <location>
        <position position="102"/>
    </location>
    <ligand>
        <name>Fe cation</name>
        <dbReference type="ChEBI" id="CHEBI:24875"/>
        <label>2</label>
    </ligand>
</feature>
<feature type="binding site" evidence="2 6 7">
    <location>
        <position position="105"/>
    </location>
    <ligand>
        <name>Fe cation</name>
        <dbReference type="ChEBI" id="CHEBI:24875"/>
        <label>1</label>
    </ligand>
</feature>
<feature type="binding site" evidence="2 6 7">
    <location>
        <position position="105"/>
    </location>
    <ligand>
        <name>Fe cation</name>
        <dbReference type="ChEBI" id="CHEBI:24875"/>
        <label>3</label>
    </ligand>
</feature>
<feature type="binding site" evidence="2 6 7">
    <location>
        <position position="113"/>
    </location>
    <ligand>
        <name>Fe cation</name>
        <dbReference type="ChEBI" id="CHEBI:24875"/>
        <label>1</label>
    </ligand>
</feature>
<feature type="binding site" evidence="2 6 7">
    <location>
        <position position="113"/>
    </location>
    <ligand>
        <name>Fe cation</name>
        <dbReference type="ChEBI" id="CHEBI:24875"/>
        <label>2</label>
    </ligand>
</feature>
<feature type="binding site" evidence="2 6 7">
    <location>
        <position position="113"/>
    </location>
    <ligand>
        <name>Fe cation</name>
        <dbReference type="ChEBI" id="CHEBI:24875"/>
        <label>3</label>
    </ligand>
</feature>
<feature type="binding site" evidence="2 6 7">
    <location>
        <position position="116"/>
    </location>
    <ligand>
        <name>Fe cation</name>
        <dbReference type="ChEBI" id="CHEBI:24875"/>
        <label>1</label>
    </ligand>
</feature>
<feature type="binding site" evidence="2 6 7">
    <location>
        <position position="116"/>
    </location>
    <ligand>
        <name>Fe cation</name>
        <dbReference type="ChEBI" id="CHEBI:24875"/>
        <label>2</label>
    </ligand>
</feature>
<feature type="binding site" evidence="2 6 7">
    <location>
        <position position="116"/>
    </location>
    <ligand>
        <name>Fe cation</name>
        <dbReference type="ChEBI" id="CHEBI:24875"/>
        <label>3</label>
    </ligand>
</feature>
<feature type="binding site" evidence="2 6 7">
    <location>
        <position position="149"/>
    </location>
    <ligand>
        <name>Fe cation</name>
        <dbReference type="ChEBI" id="CHEBI:24875"/>
        <label>2</label>
    </ligand>
</feature>
<feature type="binding site" evidence="2 6 7">
    <location>
        <position position="153"/>
    </location>
    <ligand>
        <name>Fe cation</name>
        <dbReference type="ChEBI" id="CHEBI:24875"/>
        <label>1</label>
    </ligand>
</feature>
<feature type="mutagenesis site" description="Significantly reduces transport of iron ions; when associated with A-36." evidence="2">
    <original>E</original>
    <variation>A</variation>
    <location>
        <position position="32"/>
    </location>
</feature>
<feature type="mutagenesis site" description="Significantly reduces transport of iron ions; when associated with A-32." evidence="2">
    <original>D</original>
    <variation>A</variation>
    <location>
        <position position="36"/>
    </location>
</feature>
<feature type="mutagenesis site" description="Strongly reduces transport of iron ions." evidence="2">
    <original>D</original>
    <variation>A</variation>
    <location>
        <position position="43"/>
    </location>
</feature>
<feature type="mutagenesis site" description="Strongly reduces transport of iron ions." evidence="2">
    <original>G</original>
    <variation>A</variation>
    <location>
        <position position="44"/>
    </location>
</feature>
<feature type="mutagenesis site" description="Strongly reduces transport of iron ions." evidence="2">
    <original>P</original>
    <variation>A</variation>
    <location>
        <position position="48"/>
    </location>
</feature>
<feature type="mutagenesis site" description="Reduces transport of iron ions 2-fold." evidence="2">
    <original>G</original>
    <variation>A</variation>
    <location>
        <position position="69"/>
    </location>
</feature>
<feature type="mutagenesis site" description="Strongly reduces transport of iron ions." evidence="2">
    <original>E</original>
    <variation>A</variation>
    <location>
        <position position="72"/>
    </location>
</feature>
<feature type="mutagenesis site" description="Strongly reduces transport of iron ions." evidence="2">
    <original>G</original>
    <variation>A</variation>
    <location>
        <position position="76"/>
    </location>
</feature>
<feature type="mutagenesis site" description="Strongly reduces transport of iron ions." evidence="2">
    <original>M</original>
    <variation>A</variation>
    <location>
        <position position="80"/>
    </location>
</feature>
<feature type="mutagenesis site" description="Strongly reduces transport of iron ions; when associated with Q-105; Q-113; Q-116 and Q-153." evidence="2">
    <original>E</original>
    <variation>Q</variation>
    <location>
        <position position="102"/>
    </location>
</feature>
<feature type="mutagenesis site" description="Strongly reduces transport of iron ions; when associated with Q-102; Q-113; Q-116 and Q-153." evidence="2">
    <original>E</original>
    <variation>Q</variation>
    <location>
        <position position="105"/>
    </location>
</feature>
<feature type="mutagenesis site" description="Strongly reduces transport of iron ions; when associated with Q-102; Q-105; Q-116 and Q-153." evidence="2">
    <original>E</original>
    <variation>Q</variation>
    <location>
        <position position="113"/>
    </location>
</feature>
<feature type="mutagenesis site" description="Strongly reduces transport of iron ions; when associated with Q-102; Q-105; Q-113 and Q-153." evidence="2">
    <original>E</original>
    <variation>Q</variation>
    <location>
        <position position="116"/>
    </location>
</feature>
<feature type="mutagenesis site" description="Strongly reduces transport of iron ions." evidence="2">
    <original>MM</original>
    <variation>LL</variation>
    <location>
        <begin position="149"/>
        <end position="150"/>
    </location>
</feature>
<feature type="mutagenesis site" description="Strongly reduces transport of iron ions; when associated with Q-102; Q-105; Q-113 and Q-116." evidence="2">
    <original>E</original>
    <variation>Q</variation>
    <location>
        <position position="153"/>
    </location>
</feature>
<evidence type="ECO:0000255" key="1"/>
<evidence type="ECO:0000269" key="2">
    <source>
    </source>
</evidence>
<evidence type="ECO:0000303" key="3">
    <source>
    </source>
</evidence>
<evidence type="ECO:0000305" key="4"/>
<evidence type="ECO:0000305" key="5">
    <source>
    </source>
</evidence>
<evidence type="ECO:0007744" key="6">
    <source>
        <dbReference type="PDB" id="6IU3"/>
    </source>
</evidence>
<evidence type="ECO:0007744" key="7">
    <source>
        <dbReference type="PDB" id="6IU4"/>
    </source>
</evidence>
<gene>
    <name evidence="3" type="primary">VIT1</name>
</gene>
<keyword id="KW-0002">3D-structure</keyword>
<keyword id="KW-0406">Ion transport</keyword>
<keyword id="KW-0408">Iron</keyword>
<keyword id="KW-0410">Iron transport</keyword>
<keyword id="KW-0472">Membrane</keyword>
<keyword id="KW-0479">Metal-binding</keyword>
<keyword id="KW-0812">Transmembrane</keyword>
<keyword id="KW-1133">Transmembrane helix</keyword>
<keyword id="KW-0813">Transport</keyword>
<keyword id="KW-0926">Vacuole</keyword>